<feature type="chain" id="PRO_1000202298" description="Elongation factor G">
    <location>
        <begin position="1"/>
        <end position="697"/>
    </location>
</feature>
<feature type="domain" description="tr-type G">
    <location>
        <begin position="10"/>
        <end position="290"/>
    </location>
</feature>
<feature type="binding site" evidence="1">
    <location>
        <begin position="19"/>
        <end position="26"/>
    </location>
    <ligand>
        <name>GTP</name>
        <dbReference type="ChEBI" id="CHEBI:37565"/>
    </ligand>
</feature>
<feature type="binding site" evidence="1">
    <location>
        <begin position="89"/>
        <end position="93"/>
    </location>
    <ligand>
        <name>GTP</name>
        <dbReference type="ChEBI" id="CHEBI:37565"/>
    </ligand>
</feature>
<feature type="binding site" evidence="1">
    <location>
        <begin position="143"/>
        <end position="146"/>
    </location>
    <ligand>
        <name>GTP</name>
        <dbReference type="ChEBI" id="CHEBI:37565"/>
    </ligand>
</feature>
<sequence length="697" mass="76634">MTTKAQSYLTHFRNIGIAAHIDAGKTTTTERILYYTGRTHNIGEVHDGAATMDWMEQERERGITITAAATTAKWKRSGTDQEYVVNIIDTPGHVDFTIEVERSMRVLDGAVAVFDSSQGVEPQSETVWRQADRYGVPRIAFSNKMDKTGASFELVLTDIKERLGAIPAPIQYPMGQENDFKGIIDIVRMRAHVYTNDLGTDIVESDIPAEFADKVAEMRAQLIEAAAEVDEDLMMMYLEGEEPSVEQLVSAIRKGTIEKKIFPVLCGSALKNKGVQLLLDAVVDYLPSPLEVPAIRGKVEDSEDTVEFPADPEGKLAALAFKIMADPYVGRLTFVRIYSGTLQSGSYVYNASKDKRDRVGRLLKMHANSREEVTELRAGELGAVIGLKDAGTGNTLIADGEDRVLLESIDVPEPVIKLAIEPKTKADQEKMGIGLQKLAEEDPTFRVESDQESGQTTISGMGELHLEILVDRLKREYKVEANVGAPQVAYRETITKAVDVEGKFVRQSGGRGQFGHVKIKAEPLEPGAGFVFENIVVGGTVPREFIGPAQKGIEEALQSGPMLGFPVVDMKVSLYDGSYHEVDSSEMAFKIAGSMALKEAVQKGAPAILEPIMRVEVTVPEDYMGDIIGDLNSRRGQIQGMEARGNAQIVKAFVPLSEMFGYATDMRSMTQGRASYSMFFDHYSQVPNNLAQQLMKK</sequence>
<dbReference type="EMBL" id="CP001114">
    <property type="protein sequence ID" value="ACO46887.1"/>
    <property type="molecule type" value="Genomic_DNA"/>
</dbReference>
<dbReference type="RefSeq" id="WP_012694008.1">
    <property type="nucleotide sequence ID" value="NC_012526.1"/>
</dbReference>
<dbReference type="SMR" id="C1CXH0"/>
<dbReference type="STRING" id="546414.Deide_18990"/>
<dbReference type="PaxDb" id="546414-Deide_18990"/>
<dbReference type="KEGG" id="ddr:Deide_18990"/>
<dbReference type="eggNOG" id="COG0480">
    <property type="taxonomic scope" value="Bacteria"/>
</dbReference>
<dbReference type="HOGENOM" id="CLU_002794_4_1_0"/>
<dbReference type="OrthoDB" id="9801591at2"/>
<dbReference type="Proteomes" id="UP000002208">
    <property type="component" value="Chromosome"/>
</dbReference>
<dbReference type="GO" id="GO:0005737">
    <property type="term" value="C:cytoplasm"/>
    <property type="evidence" value="ECO:0007669"/>
    <property type="project" value="UniProtKB-SubCell"/>
</dbReference>
<dbReference type="GO" id="GO:0005525">
    <property type="term" value="F:GTP binding"/>
    <property type="evidence" value="ECO:0007669"/>
    <property type="project" value="UniProtKB-UniRule"/>
</dbReference>
<dbReference type="GO" id="GO:0003924">
    <property type="term" value="F:GTPase activity"/>
    <property type="evidence" value="ECO:0007669"/>
    <property type="project" value="InterPro"/>
</dbReference>
<dbReference type="GO" id="GO:0003746">
    <property type="term" value="F:translation elongation factor activity"/>
    <property type="evidence" value="ECO:0007669"/>
    <property type="project" value="UniProtKB-UniRule"/>
</dbReference>
<dbReference type="GO" id="GO:0032790">
    <property type="term" value="P:ribosome disassembly"/>
    <property type="evidence" value="ECO:0007669"/>
    <property type="project" value="TreeGrafter"/>
</dbReference>
<dbReference type="CDD" id="cd01886">
    <property type="entry name" value="EF-G"/>
    <property type="match status" value="1"/>
</dbReference>
<dbReference type="CDD" id="cd16262">
    <property type="entry name" value="EFG_III"/>
    <property type="match status" value="1"/>
</dbReference>
<dbReference type="CDD" id="cd01434">
    <property type="entry name" value="EFG_mtEFG1_IV"/>
    <property type="match status" value="1"/>
</dbReference>
<dbReference type="CDD" id="cd03713">
    <property type="entry name" value="EFG_mtEFG_C"/>
    <property type="match status" value="1"/>
</dbReference>
<dbReference type="CDD" id="cd04088">
    <property type="entry name" value="EFG_mtEFG_II"/>
    <property type="match status" value="1"/>
</dbReference>
<dbReference type="FunFam" id="2.40.30.10:FF:000006">
    <property type="entry name" value="Elongation factor G"/>
    <property type="match status" value="1"/>
</dbReference>
<dbReference type="FunFam" id="3.30.230.10:FF:000003">
    <property type="entry name" value="Elongation factor G"/>
    <property type="match status" value="1"/>
</dbReference>
<dbReference type="FunFam" id="3.30.70.240:FF:000001">
    <property type="entry name" value="Elongation factor G"/>
    <property type="match status" value="1"/>
</dbReference>
<dbReference type="FunFam" id="3.30.70.870:FF:000001">
    <property type="entry name" value="Elongation factor G"/>
    <property type="match status" value="1"/>
</dbReference>
<dbReference type="FunFam" id="3.40.50.300:FF:000029">
    <property type="entry name" value="Elongation factor G"/>
    <property type="match status" value="1"/>
</dbReference>
<dbReference type="Gene3D" id="3.30.230.10">
    <property type="match status" value="1"/>
</dbReference>
<dbReference type="Gene3D" id="3.30.70.240">
    <property type="match status" value="1"/>
</dbReference>
<dbReference type="Gene3D" id="3.30.70.870">
    <property type="entry name" value="Elongation Factor G (Translational Gtpase), domain 3"/>
    <property type="match status" value="1"/>
</dbReference>
<dbReference type="Gene3D" id="3.40.50.300">
    <property type="entry name" value="P-loop containing nucleotide triphosphate hydrolases"/>
    <property type="match status" value="1"/>
</dbReference>
<dbReference type="Gene3D" id="2.40.30.10">
    <property type="entry name" value="Translation factors"/>
    <property type="match status" value="1"/>
</dbReference>
<dbReference type="HAMAP" id="MF_00054_B">
    <property type="entry name" value="EF_G_EF_2_B"/>
    <property type="match status" value="1"/>
</dbReference>
<dbReference type="InterPro" id="IPR041095">
    <property type="entry name" value="EFG_II"/>
</dbReference>
<dbReference type="InterPro" id="IPR009022">
    <property type="entry name" value="EFG_III"/>
</dbReference>
<dbReference type="InterPro" id="IPR035647">
    <property type="entry name" value="EFG_III/V"/>
</dbReference>
<dbReference type="InterPro" id="IPR047872">
    <property type="entry name" value="EFG_IV"/>
</dbReference>
<dbReference type="InterPro" id="IPR035649">
    <property type="entry name" value="EFG_V"/>
</dbReference>
<dbReference type="InterPro" id="IPR000640">
    <property type="entry name" value="EFG_V-like"/>
</dbReference>
<dbReference type="InterPro" id="IPR004161">
    <property type="entry name" value="EFTu-like_2"/>
</dbReference>
<dbReference type="InterPro" id="IPR031157">
    <property type="entry name" value="G_TR_CS"/>
</dbReference>
<dbReference type="InterPro" id="IPR027417">
    <property type="entry name" value="P-loop_NTPase"/>
</dbReference>
<dbReference type="InterPro" id="IPR020568">
    <property type="entry name" value="Ribosomal_Su5_D2-typ_SF"/>
</dbReference>
<dbReference type="InterPro" id="IPR014721">
    <property type="entry name" value="Ribsml_uS5_D2-typ_fold_subgr"/>
</dbReference>
<dbReference type="InterPro" id="IPR005225">
    <property type="entry name" value="Small_GTP-bd"/>
</dbReference>
<dbReference type="InterPro" id="IPR000795">
    <property type="entry name" value="T_Tr_GTP-bd_dom"/>
</dbReference>
<dbReference type="InterPro" id="IPR009000">
    <property type="entry name" value="Transl_B-barrel_sf"/>
</dbReference>
<dbReference type="InterPro" id="IPR004540">
    <property type="entry name" value="Transl_elong_EFG/EF2"/>
</dbReference>
<dbReference type="InterPro" id="IPR005517">
    <property type="entry name" value="Transl_elong_EFG/EF2_IV"/>
</dbReference>
<dbReference type="NCBIfam" id="TIGR00484">
    <property type="entry name" value="EF-G"/>
    <property type="match status" value="1"/>
</dbReference>
<dbReference type="NCBIfam" id="NF009379">
    <property type="entry name" value="PRK12740.1-3"/>
    <property type="match status" value="1"/>
</dbReference>
<dbReference type="NCBIfam" id="NF009381">
    <property type="entry name" value="PRK12740.1-5"/>
    <property type="match status" value="1"/>
</dbReference>
<dbReference type="NCBIfam" id="TIGR00231">
    <property type="entry name" value="small_GTP"/>
    <property type="match status" value="1"/>
</dbReference>
<dbReference type="PANTHER" id="PTHR43261:SF1">
    <property type="entry name" value="RIBOSOME-RELEASING FACTOR 2, MITOCHONDRIAL"/>
    <property type="match status" value="1"/>
</dbReference>
<dbReference type="PANTHER" id="PTHR43261">
    <property type="entry name" value="TRANSLATION ELONGATION FACTOR G-RELATED"/>
    <property type="match status" value="1"/>
</dbReference>
<dbReference type="Pfam" id="PF00679">
    <property type="entry name" value="EFG_C"/>
    <property type="match status" value="1"/>
</dbReference>
<dbReference type="Pfam" id="PF14492">
    <property type="entry name" value="EFG_III"/>
    <property type="match status" value="1"/>
</dbReference>
<dbReference type="Pfam" id="PF03764">
    <property type="entry name" value="EFG_IV"/>
    <property type="match status" value="1"/>
</dbReference>
<dbReference type="Pfam" id="PF00009">
    <property type="entry name" value="GTP_EFTU"/>
    <property type="match status" value="1"/>
</dbReference>
<dbReference type="Pfam" id="PF03144">
    <property type="entry name" value="GTP_EFTU_D2"/>
    <property type="match status" value="1"/>
</dbReference>
<dbReference type="PRINTS" id="PR00315">
    <property type="entry name" value="ELONGATNFCT"/>
</dbReference>
<dbReference type="SMART" id="SM00838">
    <property type="entry name" value="EFG_C"/>
    <property type="match status" value="1"/>
</dbReference>
<dbReference type="SMART" id="SM00889">
    <property type="entry name" value="EFG_IV"/>
    <property type="match status" value="1"/>
</dbReference>
<dbReference type="SUPFAM" id="SSF54980">
    <property type="entry name" value="EF-G C-terminal domain-like"/>
    <property type="match status" value="2"/>
</dbReference>
<dbReference type="SUPFAM" id="SSF52540">
    <property type="entry name" value="P-loop containing nucleoside triphosphate hydrolases"/>
    <property type="match status" value="1"/>
</dbReference>
<dbReference type="SUPFAM" id="SSF54211">
    <property type="entry name" value="Ribosomal protein S5 domain 2-like"/>
    <property type="match status" value="1"/>
</dbReference>
<dbReference type="SUPFAM" id="SSF50447">
    <property type="entry name" value="Translation proteins"/>
    <property type="match status" value="1"/>
</dbReference>
<dbReference type="PROSITE" id="PS00301">
    <property type="entry name" value="G_TR_1"/>
    <property type="match status" value="1"/>
</dbReference>
<dbReference type="PROSITE" id="PS51722">
    <property type="entry name" value="G_TR_2"/>
    <property type="match status" value="1"/>
</dbReference>
<proteinExistence type="inferred from homology"/>
<reference key="1">
    <citation type="journal article" date="2009" name="PLoS Genet.">
        <title>Alliance of proteomics and genomics to unravel the specificities of Sahara bacterium Deinococcus deserti.</title>
        <authorList>
            <person name="de Groot A."/>
            <person name="Dulermo R."/>
            <person name="Ortet P."/>
            <person name="Blanchard L."/>
            <person name="Guerin P."/>
            <person name="Fernandez B."/>
            <person name="Vacherie B."/>
            <person name="Dossat C."/>
            <person name="Jolivet E."/>
            <person name="Siguier P."/>
            <person name="Chandler M."/>
            <person name="Barakat M."/>
            <person name="Dedieu A."/>
            <person name="Barbe V."/>
            <person name="Heulin T."/>
            <person name="Sommer S."/>
            <person name="Achouak W."/>
            <person name="Armengaud J."/>
        </authorList>
    </citation>
    <scope>NUCLEOTIDE SEQUENCE [LARGE SCALE GENOMIC DNA]</scope>
    <source>
        <strain>DSM 17065 / CIP 109153 / LMG 22923 / VCD115</strain>
    </source>
</reference>
<evidence type="ECO:0000255" key="1">
    <source>
        <dbReference type="HAMAP-Rule" id="MF_00054"/>
    </source>
</evidence>
<keyword id="KW-0963">Cytoplasm</keyword>
<keyword id="KW-0251">Elongation factor</keyword>
<keyword id="KW-0342">GTP-binding</keyword>
<keyword id="KW-0547">Nucleotide-binding</keyword>
<keyword id="KW-0648">Protein biosynthesis</keyword>
<keyword id="KW-1185">Reference proteome</keyword>
<comment type="function">
    <text evidence="1">Catalyzes the GTP-dependent ribosomal translocation step during translation elongation. During this step, the ribosome changes from the pre-translocational (PRE) to the post-translocational (POST) state as the newly formed A-site-bound peptidyl-tRNA and P-site-bound deacylated tRNA move to the P and E sites, respectively. Catalyzes the coordinated movement of the two tRNA molecules, the mRNA and conformational changes in the ribosome.</text>
</comment>
<comment type="subcellular location">
    <subcellularLocation>
        <location evidence="1">Cytoplasm</location>
    </subcellularLocation>
</comment>
<comment type="similarity">
    <text evidence="1">Belongs to the TRAFAC class translation factor GTPase superfamily. Classic translation factor GTPase family. EF-G/EF-2 subfamily.</text>
</comment>
<organism>
    <name type="scientific">Deinococcus deserti (strain DSM 17065 / CIP 109153 / LMG 22923 / VCD115)</name>
    <dbReference type="NCBI Taxonomy" id="546414"/>
    <lineage>
        <taxon>Bacteria</taxon>
        <taxon>Thermotogati</taxon>
        <taxon>Deinococcota</taxon>
        <taxon>Deinococci</taxon>
        <taxon>Deinococcales</taxon>
        <taxon>Deinococcaceae</taxon>
        <taxon>Deinococcus</taxon>
    </lineage>
</organism>
<gene>
    <name evidence="1" type="primary">fusA</name>
    <name type="ordered locus">Deide_18990</name>
</gene>
<protein>
    <recommendedName>
        <fullName evidence="1">Elongation factor G</fullName>
        <shortName evidence="1">EF-G</shortName>
    </recommendedName>
</protein>
<accession>C1CXH0</accession>
<name>EFG_DEIDV</name>